<comment type="function">
    <text evidence="1">Catalyzes the ATP-dependent conversion of 7-carboxy-7-deazaguanine (CDG) to 7-cyano-7-deazaguanine (preQ(0)).</text>
</comment>
<comment type="catalytic activity">
    <reaction evidence="1">
        <text>7-carboxy-7-deazaguanine + NH4(+) + ATP = 7-cyano-7-deazaguanine + ADP + phosphate + H2O + H(+)</text>
        <dbReference type="Rhea" id="RHEA:27982"/>
        <dbReference type="ChEBI" id="CHEBI:15377"/>
        <dbReference type="ChEBI" id="CHEBI:15378"/>
        <dbReference type="ChEBI" id="CHEBI:28938"/>
        <dbReference type="ChEBI" id="CHEBI:30616"/>
        <dbReference type="ChEBI" id="CHEBI:43474"/>
        <dbReference type="ChEBI" id="CHEBI:45075"/>
        <dbReference type="ChEBI" id="CHEBI:61036"/>
        <dbReference type="ChEBI" id="CHEBI:456216"/>
        <dbReference type="EC" id="6.3.4.20"/>
    </reaction>
</comment>
<comment type="cofactor">
    <cofactor evidence="1">
        <name>Zn(2+)</name>
        <dbReference type="ChEBI" id="CHEBI:29105"/>
    </cofactor>
    <text evidence="1">Binds 1 zinc ion per subunit.</text>
</comment>
<comment type="pathway">
    <text evidence="1">Purine metabolism; 7-cyano-7-deazaguanine biosynthesis.</text>
</comment>
<comment type="similarity">
    <text evidence="1">Belongs to the QueC family.</text>
</comment>
<evidence type="ECO:0000255" key="1">
    <source>
        <dbReference type="HAMAP-Rule" id="MF_01633"/>
    </source>
</evidence>
<sequence>MTKRAIVLLSGGLDSATVLAMAKAQGFETYALSMRYGQRHSSELDAAKQVASALGAVRHEIVDLDLRRFGGSALTDDKLDVPTGGASSGIPITYVPARNTIMLSLALGWAEAVGGRDLFFGANAVDYSGYPDCRPEYVAAYETLANLATKAGVEGDRFHVHAPIIDMTKAEIIRAGIRLGVDYSMTVSCYKADDDGRACGVCDSCRIRRAGFEAAGVPDPTRYQNA</sequence>
<keyword id="KW-0067">ATP-binding</keyword>
<keyword id="KW-0436">Ligase</keyword>
<keyword id="KW-0479">Metal-binding</keyword>
<keyword id="KW-0547">Nucleotide-binding</keyword>
<keyword id="KW-0671">Queuosine biosynthesis</keyword>
<keyword id="KW-0862">Zinc</keyword>
<proteinExistence type="inferred from homology"/>
<reference key="1">
    <citation type="journal article" date="2010" name="PLoS ONE">
        <title>The complete multipartite genome sequence of Cupriavidus necator JMP134, a versatile pollutant degrader.</title>
        <authorList>
            <person name="Lykidis A."/>
            <person name="Perez-Pantoja D."/>
            <person name="Ledger T."/>
            <person name="Mavromatis K."/>
            <person name="Anderson I.J."/>
            <person name="Ivanova N.N."/>
            <person name="Hooper S.D."/>
            <person name="Lapidus A."/>
            <person name="Lucas S."/>
            <person name="Gonzalez B."/>
            <person name="Kyrpides N.C."/>
        </authorList>
    </citation>
    <scope>NUCLEOTIDE SEQUENCE [LARGE SCALE GENOMIC DNA]</scope>
    <source>
        <strain>JMP134 / LMG 1197</strain>
    </source>
</reference>
<dbReference type="EC" id="6.3.4.20" evidence="1"/>
<dbReference type="EMBL" id="CP000090">
    <property type="protein sequence ID" value="AAZ60178.1"/>
    <property type="molecule type" value="Genomic_DNA"/>
</dbReference>
<dbReference type="SMR" id="Q474K5"/>
<dbReference type="STRING" id="264198.Reut_A0798"/>
<dbReference type="KEGG" id="reu:Reut_A0798"/>
<dbReference type="eggNOG" id="COG0603">
    <property type="taxonomic scope" value="Bacteria"/>
</dbReference>
<dbReference type="HOGENOM" id="CLU_081854_1_1_4"/>
<dbReference type="OrthoDB" id="9789567at2"/>
<dbReference type="UniPathway" id="UPA00391"/>
<dbReference type="GO" id="GO:0005524">
    <property type="term" value="F:ATP binding"/>
    <property type="evidence" value="ECO:0007669"/>
    <property type="project" value="UniProtKB-UniRule"/>
</dbReference>
<dbReference type="GO" id="GO:0016879">
    <property type="term" value="F:ligase activity, forming carbon-nitrogen bonds"/>
    <property type="evidence" value="ECO:0007669"/>
    <property type="project" value="UniProtKB-UniRule"/>
</dbReference>
<dbReference type="GO" id="GO:0008270">
    <property type="term" value="F:zinc ion binding"/>
    <property type="evidence" value="ECO:0007669"/>
    <property type="project" value="UniProtKB-UniRule"/>
</dbReference>
<dbReference type="GO" id="GO:0008616">
    <property type="term" value="P:queuosine biosynthetic process"/>
    <property type="evidence" value="ECO:0007669"/>
    <property type="project" value="UniProtKB-UniRule"/>
</dbReference>
<dbReference type="CDD" id="cd01995">
    <property type="entry name" value="QueC-like"/>
    <property type="match status" value="1"/>
</dbReference>
<dbReference type="FunFam" id="3.40.50.620:FF:000131">
    <property type="entry name" value="7-cyano-7-deazaguanine synthase"/>
    <property type="match status" value="1"/>
</dbReference>
<dbReference type="Gene3D" id="3.40.50.620">
    <property type="entry name" value="HUPs"/>
    <property type="match status" value="1"/>
</dbReference>
<dbReference type="HAMAP" id="MF_01633">
    <property type="entry name" value="QueC"/>
    <property type="match status" value="1"/>
</dbReference>
<dbReference type="InterPro" id="IPR018317">
    <property type="entry name" value="QueC"/>
</dbReference>
<dbReference type="InterPro" id="IPR014729">
    <property type="entry name" value="Rossmann-like_a/b/a_fold"/>
</dbReference>
<dbReference type="NCBIfam" id="TIGR00364">
    <property type="entry name" value="7-cyano-7-deazaguanine synthase QueC"/>
    <property type="match status" value="1"/>
</dbReference>
<dbReference type="PANTHER" id="PTHR42914">
    <property type="entry name" value="7-CYANO-7-DEAZAGUANINE SYNTHASE"/>
    <property type="match status" value="1"/>
</dbReference>
<dbReference type="PANTHER" id="PTHR42914:SF1">
    <property type="entry name" value="7-CYANO-7-DEAZAGUANINE SYNTHASE"/>
    <property type="match status" value="1"/>
</dbReference>
<dbReference type="Pfam" id="PF06508">
    <property type="entry name" value="QueC"/>
    <property type="match status" value="1"/>
</dbReference>
<dbReference type="PIRSF" id="PIRSF006293">
    <property type="entry name" value="ExsB"/>
    <property type="match status" value="1"/>
</dbReference>
<dbReference type="SUPFAM" id="SSF52402">
    <property type="entry name" value="Adenine nucleotide alpha hydrolases-like"/>
    <property type="match status" value="1"/>
</dbReference>
<accession>Q474K5</accession>
<feature type="chain" id="PRO_0000246895" description="7-cyano-7-deazaguanine synthase">
    <location>
        <begin position="1"/>
        <end position="226"/>
    </location>
</feature>
<feature type="binding site" evidence="1">
    <location>
        <begin position="9"/>
        <end position="19"/>
    </location>
    <ligand>
        <name>ATP</name>
        <dbReference type="ChEBI" id="CHEBI:30616"/>
    </ligand>
</feature>
<feature type="binding site" evidence="1">
    <location>
        <position position="189"/>
    </location>
    <ligand>
        <name>Zn(2+)</name>
        <dbReference type="ChEBI" id="CHEBI:29105"/>
    </ligand>
</feature>
<feature type="binding site" evidence="1">
    <location>
        <position position="199"/>
    </location>
    <ligand>
        <name>Zn(2+)</name>
        <dbReference type="ChEBI" id="CHEBI:29105"/>
    </ligand>
</feature>
<feature type="binding site" evidence="1">
    <location>
        <position position="202"/>
    </location>
    <ligand>
        <name>Zn(2+)</name>
        <dbReference type="ChEBI" id="CHEBI:29105"/>
    </ligand>
</feature>
<feature type="binding site" evidence="1">
    <location>
        <position position="205"/>
    </location>
    <ligand>
        <name>Zn(2+)</name>
        <dbReference type="ChEBI" id="CHEBI:29105"/>
    </ligand>
</feature>
<gene>
    <name evidence="1" type="primary">queC</name>
    <name type="ordered locus">Reut_A0798</name>
</gene>
<name>QUEC_CUPPJ</name>
<organism>
    <name type="scientific">Cupriavidus pinatubonensis (strain JMP 134 / LMG 1197)</name>
    <name type="common">Cupriavidus necator (strain JMP 134)</name>
    <dbReference type="NCBI Taxonomy" id="264198"/>
    <lineage>
        <taxon>Bacteria</taxon>
        <taxon>Pseudomonadati</taxon>
        <taxon>Pseudomonadota</taxon>
        <taxon>Betaproteobacteria</taxon>
        <taxon>Burkholderiales</taxon>
        <taxon>Burkholderiaceae</taxon>
        <taxon>Cupriavidus</taxon>
    </lineage>
</organism>
<protein>
    <recommendedName>
        <fullName evidence="1">7-cyano-7-deazaguanine synthase</fullName>
        <ecNumber evidence="1">6.3.4.20</ecNumber>
    </recommendedName>
    <alternativeName>
        <fullName evidence="1">7-cyano-7-carbaguanine synthase</fullName>
    </alternativeName>
    <alternativeName>
        <fullName evidence="1">PreQ(0) synthase</fullName>
    </alternativeName>
    <alternativeName>
        <fullName evidence="1">Queuosine biosynthesis protein QueC</fullName>
    </alternativeName>
</protein>